<comment type="function">
    <text evidence="1 2">The METTL3-METTL14 heterodimer forms a N6-methyltransferase complex that methylates adenosine residues at the N(6) position of some mRNAs and regulates the circadian clock, differentiation of embryonic stem cells and cortical neurogenesis. In the heterodimer formed with mettl3, mettl14 constitutes the RNA-binding scaffold that recognizes the substrate rather than the catalytic core. N6-methyladenosine (m6A), which takes place at the 5'-[AG]GAC-3' consensus sites of some mRNAs, plays a role in mRNA stability and processing.</text>
</comment>
<comment type="subunit">
    <text evidence="2">Heterodimer; heterodimerizes with mettl3 to form an antiparallel heterodimer that constitutes an active methyltransferase. Component of the WMM complex, a N6-methyltransferase complex composed of a catalytic subcomplex, named MAC, and of an associated subcomplex, named MACOM. The MAC subcomplex is composed of mettl3 and mettl14.</text>
</comment>
<comment type="subcellular location">
    <subcellularLocation>
        <location evidence="1">Nucleus</location>
    </subcellularLocation>
</comment>
<comment type="similarity">
    <text evidence="3">Belongs to the MT-A70-like family.</text>
</comment>
<name>MET14_XENLA</name>
<evidence type="ECO:0000250" key="1">
    <source>
        <dbReference type="UniProtKB" id="Q3UIK4"/>
    </source>
</evidence>
<evidence type="ECO:0000250" key="2">
    <source>
        <dbReference type="UniProtKB" id="Q9HCE5"/>
    </source>
</evidence>
<evidence type="ECO:0000255" key="3">
    <source>
        <dbReference type="PROSITE-ProRule" id="PRU00489"/>
    </source>
</evidence>
<evidence type="ECO:0000256" key="4">
    <source>
        <dbReference type="SAM" id="MobiDB-lite"/>
    </source>
</evidence>
<reference key="1">
    <citation type="submission" date="2004-04" db="EMBL/GenBank/DDBJ databases">
        <authorList>
            <consortium name="NIH - Xenopus Gene Collection (XGC) project"/>
        </authorList>
    </citation>
    <scope>NUCLEOTIDE SEQUENCE [LARGE SCALE MRNA]</scope>
    <source>
        <tissue>Embryo</tissue>
    </source>
</reference>
<dbReference type="EMBL" id="BC068744">
    <property type="protein sequence ID" value="AAH68744.1"/>
    <property type="molecule type" value="mRNA"/>
</dbReference>
<dbReference type="RefSeq" id="NP_001084520.1">
    <property type="nucleotide sequence ID" value="NM_001091051.1"/>
</dbReference>
<dbReference type="SMR" id="Q6NU56"/>
<dbReference type="DNASU" id="414467"/>
<dbReference type="GeneID" id="414467"/>
<dbReference type="KEGG" id="xla:414467"/>
<dbReference type="AGR" id="Xenbase:XB-GENE-5813628"/>
<dbReference type="CTD" id="414467"/>
<dbReference type="Xenbase" id="XB-GENE-5813628">
    <property type="gene designation" value="mettl14.L"/>
</dbReference>
<dbReference type="OrthoDB" id="14833at2759"/>
<dbReference type="Proteomes" id="UP000186698">
    <property type="component" value="Chromosome 1L"/>
</dbReference>
<dbReference type="Bgee" id="414467">
    <property type="expression patterns" value="Expressed in egg cell and 19 other cell types or tissues"/>
</dbReference>
<dbReference type="GO" id="GO:0005634">
    <property type="term" value="C:nucleus"/>
    <property type="evidence" value="ECO:0000250"/>
    <property type="project" value="UniProtKB"/>
</dbReference>
<dbReference type="GO" id="GO:0036396">
    <property type="term" value="C:RNA N6-methyladenosine methyltransferase complex"/>
    <property type="evidence" value="ECO:0000250"/>
    <property type="project" value="UniProtKB"/>
</dbReference>
<dbReference type="GO" id="GO:0003729">
    <property type="term" value="F:mRNA binding"/>
    <property type="evidence" value="ECO:0000250"/>
    <property type="project" value="UniProtKB"/>
</dbReference>
<dbReference type="GO" id="GO:0001734">
    <property type="term" value="F:mRNA m(6)A methyltransferase activity"/>
    <property type="evidence" value="ECO:0000250"/>
    <property type="project" value="UniProtKB"/>
</dbReference>
<dbReference type="GO" id="GO:0021861">
    <property type="term" value="P:forebrain radial glial cell differentiation"/>
    <property type="evidence" value="ECO:0000250"/>
    <property type="project" value="UniProtKB"/>
</dbReference>
<dbReference type="GO" id="GO:0042063">
    <property type="term" value="P:gliogenesis"/>
    <property type="evidence" value="ECO:0000250"/>
    <property type="project" value="UniProtKB"/>
</dbReference>
<dbReference type="GO" id="GO:0061157">
    <property type="term" value="P:mRNA destabilization"/>
    <property type="evidence" value="ECO:0000250"/>
    <property type="project" value="UniProtKB"/>
</dbReference>
<dbReference type="GO" id="GO:0016556">
    <property type="term" value="P:mRNA modification"/>
    <property type="evidence" value="ECO:0000318"/>
    <property type="project" value="GO_Central"/>
</dbReference>
<dbReference type="GO" id="GO:0006397">
    <property type="term" value="P:mRNA processing"/>
    <property type="evidence" value="ECO:0000250"/>
    <property type="project" value="UniProtKB"/>
</dbReference>
<dbReference type="GO" id="GO:0000398">
    <property type="term" value="P:mRNA splicing, via spliceosome"/>
    <property type="evidence" value="ECO:0000250"/>
    <property type="project" value="UniProtKB"/>
</dbReference>
<dbReference type="GO" id="GO:0001510">
    <property type="term" value="P:RNA methylation"/>
    <property type="evidence" value="ECO:0000250"/>
    <property type="project" value="UniProtKB"/>
</dbReference>
<dbReference type="GO" id="GO:0007283">
    <property type="term" value="P:spermatogenesis"/>
    <property type="evidence" value="ECO:0000250"/>
    <property type="project" value="UniProtKB"/>
</dbReference>
<dbReference type="GO" id="GO:0019827">
    <property type="term" value="P:stem cell population maintenance"/>
    <property type="evidence" value="ECO:0000250"/>
    <property type="project" value="UniProtKB"/>
</dbReference>
<dbReference type="InterPro" id="IPR045123">
    <property type="entry name" value="METTL14-like"/>
</dbReference>
<dbReference type="InterPro" id="IPR007757">
    <property type="entry name" value="MT-A70-like"/>
</dbReference>
<dbReference type="PANTHER" id="PTHR13107">
    <property type="entry name" value="N6-ADENOSINE-METHYLTRANSFERASE NON-CATALYTIC SUBUNIT"/>
    <property type="match status" value="1"/>
</dbReference>
<dbReference type="PANTHER" id="PTHR13107:SF0">
    <property type="entry name" value="N6-ADENOSINE-METHYLTRANSFERASE NON-CATALYTIC SUBUNIT"/>
    <property type="match status" value="1"/>
</dbReference>
<dbReference type="Pfam" id="PF05063">
    <property type="entry name" value="MT-A70"/>
    <property type="match status" value="1"/>
</dbReference>
<dbReference type="PROSITE" id="PS51143">
    <property type="entry name" value="MT_A70"/>
    <property type="match status" value="1"/>
</dbReference>
<dbReference type="PROSITE" id="PS51592">
    <property type="entry name" value="SAM_MTA70L_2"/>
    <property type="match status" value="1"/>
</dbReference>
<proteinExistence type="evidence at transcript level"/>
<sequence length="456" mass="51967">MNSRLQEIRARQTLRRKLLAQQLGAESADSIGAVLNSKDEQREIAETRETSRASYDTSAAVSKRKLPEEGKADEEVVQECKDSVEPQKEEENLPYREEIYKDSSTFLKGTQSLNPHNDYCQHFVDTGHRPQNFIRDVGLADRFEEYPKLRELIRLKDELIAKSNTPPMYLQADLETFDLRELKSEFDVILLEPPLEEYFRETGIAANEKWWTWEDIMKLDIEGIAGSRAFVFLWCGSGEGLDFGRMCLRKWGFRRSEDICWIKTNKDNPGKTKTLDPKAIFQRTKEHCLMGIKGTVHRSTDGDFIHANVDIDLIITEEPEIGNIEKPVEIFHIIEHFCLGRRRLHLFGRDSTIRPGWLTVGPTLTNSNFNSETYASYFNTPNSPLTGCTEEIERLRPKTPPPKSDRGFGASRGGGRGGASAGRGERGRERNRGSFRGDRGNFRGRGGPHRGVFAPR</sequence>
<keyword id="KW-0221">Differentiation</keyword>
<keyword id="KW-0539">Nucleus</keyword>
<keyword id="KW-1185">Reference proteome</keyword>
<keyword id="KW-0694">RNA-binding</keyword>
<keyword id="KW-0744">Spermatogenesis</keyword>
<organism>
    <name type="scientific">Xenopus laevis</name>
    <name type="common">African clawed frog</name>
    <dbReference type="NCBI Taxonomy" id="8355"/>
    <lineage>
        <taxon>Eukaryota</taxon>
        <taxon>Metazoa</taxon>
        <taxon>Chordata</taxon>
        <taxon>Craniata</taxon>
        <taxon>Vertebrata</taxon>
        <taxon>Euteleostomi</taxon>
        <taxon>Amphibia</taxon>
        <taxon>Batrachia</taxon>
        <taxon>Anura</taxon>
        <taxon>Pipoidea</taxon>
        <taxon>Pipidae</taxon>
        <taxon>Xenopodinae</taxon>
        <taxon>Xenopus</taxon>
        <taxon>Xenopus</taxon>
    </lineage>
</organism>
<accession>Q6NU56</accession>
<feature type="chain" id="PRO_0000325795" description="N(6)-adenosine-methyltransferase non-catalytic subunit METTL14">
    <location>
        <begin position="1"/>
        <end position="456"/>
    </location>
</feature>
<feature type="region of interest" description="Disordered" evidence="4">
    <location>
        <begin position="43"/>
        <end position="74"/>
    </location>
</feature>
<feature type="region of interest" description="Interaction with METTL3" evidence="2">
    <location>
        <begin position="135"/>
        <end position="136"/>
    </location>
</feature>
<feature type="region of interest" description="Interaction with METTL3" evidence="2">
    <location>
        <begin position="237"/>
        <end position="238"/>
    </location>
</feature>
<feature type="region of interest" description="Positively charged region required for RNA-binding" evidence="2">
    <location>
        <begin position="245"/>
        <end position="254"/>
    </location>
</feature>
<feature type="region of interest" description="Interaction with METTL3" evidence="2">
    <location>
        <begin position="255"/>
        <end position="258"/>
    </location>
</feature>
<feature type="region of interest" description="Interaction with METTL3" evidence="2">
    <location>
        <begin position="278"/>
        <end position="287"/>
    </location>
</feature>
<feature type="region of interest" description="Positively charged region required for RNA-binding" evidence="2">
    <location>
        <begin position="297"/>
        <end position="298"/>
    </location>
</feature>
<feature type="region of interest" description="Interaction with METTL3" evidence="2">
    <location>
        <begin position="308"/>
        <end position="312"/>
    </location>
</feature>
<feature type="region of interest" description="Disordered" evidence="4">
    <location>
        <begin position="395"/>
        <end position="456"/>
    </location>
</feature>
<feature type="compositionally biased region" description="Basic and acidic residues" evidence="4">
    <location>
        <begin position="65"/>
        <end position="74"/>
    </location>
</feature>
<feature type="compositionally biased region" description="Gly residues" evidence="4">
    <location>
        <begin position="410"/>
        <end position="421"/>
    </location>
</feature>
<feature type="compositionally biased region" description="Basic and acidic residues" evidence="4">
    <location>
        <begin position="423"/>
        <end position="441"/>
    </location>
</feature>
<feature type="site" description="Interaction with METTL3" evidence="2">
    <location>
        <position position="146"/>
    </location>
</feature>
<feature type="site" description="Interaction with METTL3" evidence="2">
    <location>
        <position position="242"/>
    </location>
</feature>
<feature type="site" description="Interaction with METTL3" evidence="2">
    <location>
        <position position="245"/>
    </location>
</feature>
<feature type="site" description="Interaction with METTL3" evidence="2">
    <location>
        <position position="298"/>
    </location>
</feature>
<protein>
    <recommendedName>
        <fullName>N(6)-adenosine-methyltransferase non-catalytic subunit METTL14</fullName>
    </recommendedName>
    <alternativeName>
        <fullName>Methyltransferase-like protein 14</fullName>
    </alternativeName>
</protein>
<gene>
    <name type="primary">mettl14</name>
</gene>